<evidence type="ECO:0000250" key="1"/>
<evidence type="ECO:0000255" key="2">
    <source>
        <dbReference type="PROSITE-ProRule" id="PRU00981"/>
    </source>
</evidence>
<evidence type="ECO:0000256" key="3">
    <source>
        <dbReference type="SAM" id="MobiDB-lite"/>
    </source>
</evidence>
<evidence type="ECO:0000269" key="4">
    <source>
    </source>
</evidence>
<evidence type="ECO:0000269" key="5">
    <source>
    </source>
</evidence>
<evidence type="ECO:0000269" key="6">
    <source>
    </source>
</evidence>
<evidence type="ECO:0000303" key="7">
    <source>
    </source>
</evidence>
<evidence type="ECO:0000303" key="8">
    <source>
    </source>
</evidence>
<evidence type="ECO:0000303" key="9">
    <source>
    </source>
</evidence>
<evidence type="ECO:0000305" key="10"/>
<evidence type="ECO:0000312" key="11">
    <source>
        <dbReference type="EMBL" id="BAD81850.1"/>
    </source>
</evidence>
<evidence type="ECO:0000312" key="12">
    <source>
        <dbReference type="EMBL" id="BAF06613.1"/>
    </source>
</evidence>
<feature type="chain" id="PRO_0000127260" description="Transcription factor LAX PANICLE 1">
    <location>
        <begin position="1"/>
        <end position="215"/>
    </location>
</feature>
<feature type="domain" description="bHLH" evidence="2">
    <location>
        <begin position="40"/>
        <end position="89"/>
    </location>
</feature>
<feature type="region of interest" description="Disordered" evidence="3">
    <location>
        <begin position="1"/>
        <end position="48"/>
    </location>
</feature>
<feature type="region of interest" description="Basic motif; degenerate" evidence="2">
    <location>
        <begin position="40"/>
        <end position="53"/>
    </location>
</feature>
<feature type="region of interest" description="Helix-loop-helix motif" evidence="2">
    <location>
        <begin position="54"/>
        <end position="89"/>
    </location>
</feature>
<feature type="mutagenesis site" description="In lax-4; defects in lateral spikelets. Weak phenotype." evidence="5">
    <original>A</original>
    <variation>T</variation>
    <location>
        <position position="49"/>
    </location>
</feature>
<feature type="mutagenesis site" description="In lax-5; defects in lateral spikelets. Weak phenotype." evidence="5">
    <original>R</original>
    <variation>D</variation>
    <location>
        <position position="50"/>
    </location>
</feature>
<gene>
    <name evidence="7" type="primary">LAX1</name>
    <name evidence="9" type="synonym">BHLH123</name>
    <name evidence="8" type="synonym">LAX</name>
    <name evidence="12" type="ordered locus">Os01g0831000</name>
    <name evidence="10" type="ordered locus">LOC_Os01g61480</name>
    <name evidence="11" type="ORF">P0446G04.27</name>
</gene>
<comment type="function">
    <text evidence="5 6">Transcription factor that seems to regulate organogenesis in postembryonic development. Involved in the regulation of shoot branching by controlling axillary meristem initiation. Functions in association with LAX2 to regulate the process of AM formation. Possesses transactivation activity in yeast (PubMed:21963665).</text>
</comment>
<comment type="subunit">
    <text evidence="1 6">Efficient DNA binding requires dimerization with another bHLH protein (By similarity). Interacts with LAX2 (PubMed:21963665).</text>
</comment>
<comment type="subcellular location">
    <subcellularLocation>
        <location evidence="2">Nucleus</location>
    </subcellularLocation>
</comment>
<comment type="tissue specificity">
    <text evidence="5">Expressed in the boundary between the shoot apical meristem (SAM) and the region of new meristem formation.</text>
</comment>
<comment type="developmental stage">
    <text evidence="5">Expressed in growing new meristem. Down-regulated in elongating new meristem.</text>
</comment>
<comment type="disruption phenotype">
    <text evidence="4">Defects in initiation and/or maintenance of rachis-branches, lateral spikelets and terminal spikelets.</text>
</comment>
<comment type="similarity">
    <text>Belongs to the bHLH protein family.</text>
</comment>
<comment type="caution">
    <text evidence="2">Contains a degenerate basic motif not likely to bind DNA.</text>
</comment>
<proteinExistence type="evidence at protein level"/>
<accession>Q7XAQ6</accession>
<accession>Q0JI15</accession>
<reference key="1">
    <citation type="journal article" date="2003" name="Proc. Natl. Acad. Sci. U.S.A.">
        <title>LAX and SPA: major regulators of shoot branching in rice.</title>
        <authorList>
            <person name="Komatsu K."/>
            <person name="Maekawa M."/>
            <person name="Ujiie S."/>
            <person name="Satake Y."/>
            <person name="Furutani I."/>
            <person name="Okamoto H."/>
            <person name="Shimamoto K."/>
            <person name="Kyozuka J."/>
        </authorList>
    </citation>
    <scope>NUCLEOTIDE SEQUENCE [MRNA]</scope>
    <scope>FUNCTION</scope>
    <scope>TISSUE SPECIFICITY</scope>
    <scope>DEVELOPMENTAL STAGE</scope>
    <scope>MUTAGENESIS OF ALA-49 AND ARG-50</scope>
    <source>
        <strain>cv. Nipponbare</strain>
    </source>
</reference>
<reference key="2">
    <citation type="submission" date="2011-07" db="EMBL/GenBank/DDBJ databases">
        <title>Genetic and phenotypic functions of a lax panicle mutant gene in rice (Oryza sativa L.).</title>
        <authorList>
            <person name="Kang S.G."/>
            <person name="Matin N."/>
        </authorList>
    </citation>
    <scope>NUCLEOTIDE SEQUENCE [MRNA]</scope>
</reference>
<reference key="3">
    <citation type="journal article" date="2002" name="Nature">
        <title>The genome sequence and structure of rice chromosome 1.</title>
        <authorList>
            <person name="Sasaki T."/>
            <person name="Matsumoto T."/>
            <person name="Yamamoto K."/>
            <person name="Sakata K."/>
            <person name="Baba T."/>
            <person name="Katayose Y."/>
            <person name="Wu J."/>
            <person name="Niimura Y."/>
            <person name="Cheng Z."/>
            <person name="Nagamura Y."/>
            <person name="Antonio B.A."/>
            <person name="Kanamori H."/>
            <person name="Hosokawa S."/>
            <person name="Masukawa M."/>
            <person name="Arikawa K."/>
            <person name="Chiden Y."/>
            <person name="Hayashi M."/>
            <person name="Okamoto M."/>
            <person name="Ando T."/>
            <person name="Aoki H."/>
            <person name="Arita K."/>
            <person name="Hamada M."/>
            <person name="Harada C."/>
            <person name="Hijishita S."/>
            <person name="Honda M."/>
            <person name="Ichikawa Y."/>
            <person name="Idonuma A."/>
            <person name="Iijima M."/>
            <person name="Ikeda M."/>
            <person name="Ikeno M."/>
            <person name="Ito S."/>
            <person name="Ito T."/>
            <person name="Ito Y."/>
            <person name="Ito Y."/>
            <person name="Iwabuchi A."/>
            <person name="Kamiya K."/>
            <person name="Karasawa W."/>
            <person name="Katagiri S."/>
            <person name="Kikuta A."/>
            <person name="Kobayashi N."/>
            <person name="Kono I."/>
            <person name="Machita K."/>
            <person name="Maehara T."/>
            <person name="Mizuno H."/>
            <person name="Mizubayashi T."/>
            <person name="Mukai Y."/>
            <person name="Nagasaki H."/>
            <person name="Nakashima M."/>
            <person name="Nakama Y."/>
            <person name="Nakamichi Y."/>
            <person name="Nakamura M."/>
            <person name="Namiki N."/>
            <person name="Negishi M."/>
            <person name="Ohta I."/>
            <person name="Ono N."/>
            <person name="Saji S."/>
            <person name="Sakai K."/>
            <person name="Shibata M."/>
            <person name="Shimokawa T."/>
            <person name="Shomura A."/>
            <person name="Song J."/>
            <person name="Takazaki Y."/>
            <person name="Terasawa K."/>
            <person name="Tsuji K."/>
            <person name="Waki K."/>
            <person name="Yamagata H."/>
            <person name="Yamane H."/>
            <person name="Yoshiki S."/>
            <person name="Yoshihara R."/>
            <person name="Yukawa K."/>
            <person name="Zhong H."/>
            <person name="Iwama H."/>
            <person name="Endo T."/>
            <person name="Ito H."/>
            <person name="Hahn J.H."/>
            <person name="Kim H.-I."/>
            <person name="Eun M.-Y."/>
            <person name="Yano M."/>
            <person name="Jiang J."/>
            <person name="Gojobori T."/>
        </authorList>
    </citation>
    <scope>NUCLEOTIDE SEQUENCE [LARGE SCALE GENOMIC DNA]</scope>
    <source>
        <strain>cv. Nipponbare</strain>
    </source>
</reference>
<reference key="4">
    <citation type="journal article" date="2005" name="Nature">
        <title>The map-based sequence of the rice genome.</title>
        <authorList>
            <consortium name="International rice genome sequencing project (IRGSP)"/>
        </authorList>
    </citation>
    <scope>NUCLEOTIDE SEQUENCE [LARGE SCALE GENOMIC DNA]</scope>
    <source>
        <strain>cv. Nipponbare</strain>
    </source>
</reference>
<reference key="5">
    <citation type="journal article" date="2008" name="Nucleic Acids Res.">
        <title>The rice annotation project database (RAP-DB): 2008 update.</title>
        <authorList>
            <consortium name="The rice annotation project (RAP)"/>
        </authorList>
    </citation>
    <scope>GENOME REANNOTATION</scope>
    <source>
        <strain>cv. Nipponbare</strain>
    </source>
</reference>
<reference key="6">
    <citation type="journal article" date="2013" name="Rice">
        <title>Improvement of the Oryza sativa Nipponbare reference genome using next generation sequence and optical map data.</title>
        <authorList>
            <person name="Kawahara Y."/>
            <person name="de la Bastide M."/>
            <person name="Hamilton J.P."/>
            <person name="Kanamori H."/>
            <person name="McCombie W.R."/>
            <person name="Ouyang S."/>
            <person name="Schwartz D.C."/>
            <person name="Tanaka T."/>
            <person name="Wu J."/>
            <person name="Zhou S."/>
            <person name="Childs K.L."/>
            <person name="Davidson R.M."/>
            <person name="Lin H."/>
            <person name="Quesada-Ocampo L."/>
            <person name="Vaillancourt B."/>
            <person name="Sakai H."/>
            <person name="Lee S.S."/>
            <person name="Kim J."/>
            <person name="Numa H."/>
            <person name="Itoh T."/>
            <person name="Buell C.R."/>
            <person name="Matsumoto T."/>
        </authorList>
    </citation>
    <scope>GENOME REANNOTATION</scope>
    <source>
        <strain>cv. Nipponbare</strain>
    </source>
</reference>
<reference key="7">
    <citation type="journal article" date="2001" name="Dev. Biol.">
        <title>The LAX1 and FRIZZY PANICLE 2 genes determine the inflorescence architecture of rice by controlling rachis-branch and spikelet development.</title>
        <authorList>
            <person name="Komatsu M."/>
            <person name="Maekawa M."/>
            <person name="Shimamoto K."/>
            <person name="Kyozuka J."/>
        </authorList>
    </citation>
    <scope>IDENTIFICATION OF LAX PANICLE DISRUPTION PHENOTYPE</scope>
</reference>
<reference key="8">
    <citation type="journal article" date="2006" name="Plant Physiol.">
        <title>Genome-wide analysis of basic/helix-loop-helix transcription factor family in rice and Arabidopsis.</title>
        <authorList>
            <person name="Li X."/>
            <person name="Duan X."/>
            <person name="Jiang H."/>
            <person name="Sun Y."/>
            <person name="Tang Y."/>
            <person name="Yuan Z."/>
            <person name="Guo J."/>
            <person name="Liang W."/>
            <person name="Chen L."/>
            <person name="Yin J."/>
            <person name="Ma H."/>
            <person name="Wang J."/>
            <person name="Zhang D."/>
        </authorList>
    </citation>
    <scope>GENE FAMILY</scope>
    <scope>NOMENCLATURE</scope>
</reference>
<reference key="9">
    <citation type="journal article" date="2011" name="Plant Cell">
        <title>LAX PANICLE2 of rice encodes a novel nuclear protein and regulates the formation of axillary meristems.</title>
        <authorList>
            <person name="Tabuchi H."/>
            <person name="Zhang Y."/>
            <person name="Hattori S."/>
            <person name="Omae M."/>
            <person name="Shimizu-Sato S."/>
            <person name="Oikawa T."/>
            <person name="Qian Q."/>
            <person name="Nishimura M."/>
            <person name="Kitano H."/>
            <person name="Xie H."/>
            <person name="Fang X."/>
            <person name="Yoshida H."/>
            <person name="Kyozuka J."/>
            <person name="Chen F."/>
            <person name="Sato Y."/>
        </authorList>
    </citation>
    <scope>INTERACTION WITH LAX2</scope>
    <source>
        <strain>cv. Nipponbare</strain>
    </source>
</reference>
<sequence length="215" mass="23092">MHDPRGFPIHPQPYHLHPTAGGLGEGRMRGGGRRRPGAKLSTDPQSVAARERRHRISDRFRVLRSLVPGGSKMDTVSMLEQAIHYVKFLKAQVTLHQAALVQHEEGCQHADVAAAFSAADADLALELNHRHGGAGDDDAGMTTLEMAPMQEAVGYGDGPAHQMMQQALDPAGQLMMGGAHQLPPLPCCVFVQETDPSCYSVCNVHGEESGAQGSY</sequence>
<name>LAX1_ORYSJ</name>
<organism>
    <name type="scientific">Oryza sativa subsp. japonica</name>
    <name type="common">Rice</name>
    <dbReference type="NCBI Taxonomy" id="39947"/>
    <lineage>
        <taxon>Eukaryota</taxon>
        <taxon>Viridiplantae</taxon>
        <taxon>Streptophyta</taxon>
        <taxon>Embryophyta</taxon>
        <taxon>Tracheophyta</taxon>
        <taxon>Spermatophyta</taxon>
        <taxon>Magnoliopsida</taxon>
        <taxon>Liliopsida</taxon>
        <taxon>Poales</taxon>
        <taxon>Poaceae</taxon>
        <taxon>BOP clade</taxon>
        <taxon>Oryzoideae</taxon>
        <taxon>Oryzeae</taxon>
        <taxon>Oryzinae</taxon>
        <taxon>Oryza</taxon>
        <taxon>Oryza sativa</taxon>
    </lineage>
</organism>
<dbReference type="EMBL" id="AB115668">
    <property type="protein sequence ID" value="BAC80247.1"/>
    <property type="molecule type" value="mRNA"/>
</dbReference>
<dbReference type="EMBL" id="JN210896">
    <property type="protein sequence ID" value="AEL31274.1"/>
    <property type="molecule type" value="mRNA"/>
</dbReference>
<dbReference type="EMBL" id="AP003252">
    <property type="protein sequence ID" value="BAD81850.1"/>
    <property type="molecule type" value="Genomic_DNA"/>
</dbReference>
<dbReference type="EMBL" id="AP008207">
    <property type="protein sequence ID" value="BAF06613.1"/>
    <property type="molecule type" value="Genomic_DNA"/>
</dbReference>
<dbReference type="EMBL" id="AP014957">
    <property type="protein sequence ID" value="BAS75054.1"/>
    <property type="molecule type" value="Genomic_DNA"/>
</dbReference>
<dbReference type="RefSeq" id="XP_015618581.1">
    <property type="nucleotide sequence ID" value="XM_015763095.1"/>
</dbReference>
<dbReference type="SMR" id="Q7XAQ6"/>
<dbReference type="FunCoup" id="Q7XAQ6">
    <property type="interactions" value="113"/>
</dbReference>
<dbReference type="STRING" id="39947.Q7XAQ6"/>
<dbReference type="PaxDb" id="39947-Q7XAQ6"/>
<dbReference type="EnsemblPlants" id="Os01t0831000-01">
    <property type="protein sequence ID" value="Os01t0831000-01"/>
    <property type="gene ID" value="Os01g0831000"/>
</dbReference>
<dbReference type="Gramene" id="Os01t0831000-01">
    <property type="protein sequence ID" value="Os01t0831000-01"/>
    <property type="gene ID" value="Os01g0831000"/>
</dbReference>
<dbReference type="KEGG" id="dosa:Os01g0831000"/>
<dbReference type="eggNOG" id="ENOG502S37F">
    <property type="taxonomic scope" value="Eukaryota"/>
</dbReference>
<dbReference type="HOGENOM" id="CLU_1216297_0_0_1"/>
<dbReference type="InParanoid" id="Q7XAQ6"/>
<dbReference type="OMA" id="CRAGACE"/>
<dbReference type="OrthoDB" id="2017571at2759"/>
<dbReference type="PlantReactome" id="R-OSA-9608575">
    <property type="pathway name" value="Reproductive meristem phase change"/>
</dbReference>
<dbReference type="Proteomes" id="UP000000763">
    <property type="component" value="Chromosome 1"/>
</dbReference>
<dbReference type="Proteomes" id="UP000059680">
    <property type="component" value="Chromosome 1"/>
</dbReference>
<dbReference type="GO" id="GO:0005634">
    <property type="term" value="C:nucleus"/>
    <property type="evidence" value="ECO:0007669"/>
    <property type="project" value="UniProtKB-SubCell"/>
</dbReference>
<dbReference type="GO" id="GO:0003677">
    <property type="term" value="F:DNA binding"/>
    <property type="evidence" value="ECO:0007669"/>
    <property type="project" value="UniProtKB-KW"/>
</dbReference>
<dbReference type="GO" id="GO:0003700">
    <property type="term" value="F:DNA-binding transcription factor activity"/>
    <property type="evidence" value="ECO:0007669"/>
    <property type="project" value="InterPro"/>
</dbReference>
<dbReference type="GO" id="GO:0046983">
    <property type="term" value="F:protein dimerization activity"/>
    <property type="evidence" value="ECO:0007669"/>
    <property type="project" value="InterPro"/>
</dbReference>
<dbReference type="GO" id="GO:0045893">
    <property type="term" value="P:positive regulation of DNA-templated transcription"/>
    <property type="evidence" value="ECO:0000314"/>
    <property type="project" value="UniProtKB"/>
</dbReference>
<dbReference type="GO" id="GO:2000032">
    <property type="term" value="P:regulation of secondary shoot formation"/>
    <property type="evidence" value="ECO:0000315"/>
    <property type="project" value="UniProtKB"/>
</dbReference>
<dbReference type="CDD" id="cd11454">
    <property type="entry name" value="bHLH_AtIND_like"/>
    <property type="match status" value="1"/>
</dbReference>
<dbReference type="FunFam" id="4.10.280.10:FF:000089">
    <property type="entry name" value="Transcription factor LAX PANICLE"/>
    <property type="match status" value="1"/>
</dbReference>
<dbReference type="Gene3D" id="4.10.280.10">
    <property type="entry name" value="Helix-loop-helix DNA-binding domain"/>
    <property type="match status" value="1"/>
</dbReference>
<dbReference type="InterPro" id="IPR011598">
    <property type="entry name" value="bHLH_dom"/>
</dbReference>
<dbReference type="InterPro" id="IPR036638">
    <property type="entry name" value="HLH_DNA-bd_sf"/>
</dbReference>
<dbReference type="InterPro" id="IPR045843">
    <property type="entry name" value="IND-like"/>
</dbReference>
<dbReference type="PANTHER" id="PTHR45914:SF2">
    <property type="entry name" value="TRANSCRIPTION FACTOR BHLH140-LIKE PROTEIN"/>
    <property type="match status" value="1"/>
</dbReference>
<dbReference type="PANTHER" id="PTHR45914">
    <property type="entry name" value="TRANSCRIPTION FACTOR HEC3-RELATED"/>
    <property type="match status" value="1"/>
</dbReference>
<dbReference type="Pfam" id="PF00010">
    <property type="entry name" value="HLH"/>
    <property type="match status" value="1"/>
</dbReference>
<dbReference type="SMART" id="SM00353">
    <property type="entry name" value="HLH"/>
    <property type="match status" value="1"/>
</dbReference>
<dbReference type="SUPFAM" id="SSF47459">
    <property type="entry name" value="HLH, helix-loop-helix DNA-binding domain"/>
    <property type="match status" value="1"/>
</dbReference>
<dbReference type="PROSITE" id="PS50888">
    <property type="entry name" value="BHLH"/>
    <property type="match status" value="1"/>
</dbReference>
<keyword id="KW-0217">Developmental protein</keyword>
<keyword id="KW-0238">DNA-binding</keyword>
<keyword id="KW-0539">Nucleus</keyword>
<keyword id="KW-1185">Reference proteome</keyword>
<keyword id="KW-0804">Transcription</keyword>
<keyword id="KW-0805">Transcription regulation</keyword>
<protein>
    <recommendedName>
        <fullName evidence="10">Transcription factor LAX PANICLE 1</fullName>
    </recommendedName>
    <alternativeName>
        <fullName evidence="9">Basic helix-loop-helix protein 123</fullName>
        <shortName evidence="9">OsbHLH123</shortName>
    </alternativeName>
    <alternativeName>
        <fullName evidence="8">Protein LAX PANICLE</fullName>
    </alternativeName>
</protein>